<reference key="1">
    <citation type="journal article" date="2008" name="Genomics">
        <title>Evolution in the laboratory: the genome of Halobacterium salinarum strain R1 compared to that of strain NRC-1.</title>
        <authorList>
            <person name="Pfeiffer F."/>
            <person name="Schuster S.C."/>
            <person name="Broicher A."/>
            <person name="Falb M."/>
            <person name="Palm P."/>
            <person name="Rodewald K."/>
            <person name="Ruepp A."/>
            <person name="Soppa J."/>
            <person name="Tittor J."/>
            <person name="Oesterhelt D."/>
        </authorList>
    </citation>
    <scope>NUCLEOTIDE SEQUENCE [LARGE SCALE GENOMIC DNA]</scope>
    <source>
        <strain>ATCC 29341 / DSM 671 / R1</strain>
    </source>
</reference>
<sequence>MATETDLEELRRGSELVKRGFAKMQKGGVIMDVVNREQARIAEDVGAVAVMNLEAVPADIRKRGGVARMADPASLTGIIEEVSIPVMGKSRIGHRKEAEILQAVGADMIDESEVLTPADDEYHIDKREFTAPFVCGARNLGEALRRIDEGAAMIRTKGEAGTGDVNQAVHHQRNIKSAIRKLEGMDYEERDMWARDHEAPRELVHETAEMGRLPVVNFAAGGIATPADAALMMHHGCDGIFVGSGIFGAENPEAMGRAVVDAVNNHDDPERLAEIASNIGEGMQGDPNADLPEDERMQDRGN</sequence>
<dbReference type="EC" id="4.3.3.6" evidence="1"/>
<dbReference type="EMBL" id="AM774415">
    <property type="protein sequence ID" value="CAP14304.1"/>
    <property type="molecule type" value="Genomic_DNA"/>
</dbReference>
<dbReference type="RefSeq" id="WP_010903311.1">
    <property type="nucleotide sequence ID" value="NC_010364.1"/>
</dbReference>
<dbReference type="SMR" id="B0R6D5"/>
<dbReference type="EnsemblBacteria" id="CAP14304">
    <property type="protein sequence ID" value="CAP14304"/>
    <property type="gene ID" value="OE_3524F"/>
</dbReference>
<dbReference type="GeneID" id="89350020"/>
<dbReference type="KEGG" id="hsl:OE_3524F"/>
<dbReference type="HOGENOM" id="CLU_055352_1_0_2"/>
<dbReference type="PhylomeDB" id="B0R6D5"/>
<dbReference type="UniPathway" id="UPA00245"/>
<dbReference type="Proteomes" id="UP000001321">
    <property type="component" value="Chromosome"/>
</dbReference>
<dbReference type="GO" id="GO:0036381">
    <property type="term" value="F:pyridoxal 5'-phosphate synthase (glutamine hydrolysing) activity"/>
    <property type="evidence" value="ECO:0007669"/>
    <property type="project" value="UniProtKB-UniRule"/>
</dbReference>
<dbReference type="GO" id="GO:0006520">
    <property type="term" value="P:amino acid metabolic process"/>
    <property type="evidence" value="ECO:0007669"/>
    <property type="project" value="TreeGrafter"/>
</dbReference>
<dbReference type="GO" id="GO:0042823">
    <property type="term" value="P:pyridoxal phosphate biosynthetic process"/>
    <property type="evidence" value="ECO:0007669"/>
    <property type="project" value="UniProtKB-UniRule"/>
</dbReference>
<dbReference type="GO" id="GO:0008615">
    <property type="term" value="P:pyridoxine biosynthetic process"/>
    <property type="evidence" value="ECO:0007669"/>
    <property type="project" value="TreeGrafter"/>
</dbReference>
<dbReference type="CDD" id="cd04727">
    <property type="entry name" value="pdxS"/>
    <property type="match status" value="1"/>
</dbReference>
<dbReference type="FunFam" id="3.20.20.70:FF:000001">
    <property type="entry name" value="Pyridoxine biosynthesis protein PDX1"/>
    <property type="match status" value="1"/>
</dbReference>
<dbReference type="Gene3D" id="3.20.20.70">
    <property type="entry name" value="Aldolase class I"/>
    <property type="match status" value="1"/>
</dbReference>
<dbReference type="HAMAP" id="MF_01824">
    <property type="entry name" value="PdxS"/>
    <property type="match status" value="1"/>
</dbReference>
<dbReference type="InterPro" id="IPR013785">
    <property type="entry name" value="Aldolase_TIM"/>
</dbReference>
<dbReference type="InterPro" id="IPR001852">
    <property type="entry name" value="PdxS/SNZ"/>
</dbReference>
<dbReference type="InterPro" id="IPR033755">
    <property type="entry name" value="PdxS/SNZ_N"/>
</dbReference>
<dbReference type="InterPro" id="IPR011060">
    <property type="entry name" value="RibuloseP-bd_barrel"/>
</dbReference>
<dbReference type="NCBIfam" id="NF003215">
    <property type="entry name" value="PRK04180.1"/>
    <property type="match status" value="1"/>
</dbReference>
<dbReference type="PANTHER" id="PTHR31829">
    <property type="entry name" value="PYRIDOXAL 5'-PHOSPHATE SYNTHASE SUBUNIT SNZ1-RELATED"/>
    <property type="match status" value="1"/>
</dbReference>
<dbReference type="PANTHER" id="PTHR31829:SF0">
    <property type="entry name" value="PYRIDOXAL 5'-PHOSPHATE SYNTHASE SUBUNIT SNZ1-RELATED"/>
    <property type="match status" value="1"/>
</dbReference>
<dbReference type="Pfam" id="PF01680">
    <property type="entry name" value="SOR_SNZ"/>
    <property type="match status" value="1"/>
</dbReference>
<dbReference type="PIRSF" id="PIRSF029271">
    <property type="entry name" value="Pdx1"/>
    <property type="match status" value="1"/>
</dbReference>
<dbReference type="SUPFAM" id="SSF51366">
    <property type="entry name" value="Ribulose-phoshate binding barrel"/>
    <property type="match status" value="1"/>
</dbReference>
<dbReference type="PROSITE" id="PS01235">
    <property type="entry name" value="PDXS_SNZ_1"/>
    <property type="match status" value="1"/>
</dbReference>
<dbReference type="PROSITE" id="PS51129">
    <property type="entry name" value="PDXS_SNZ_2"/>
    <property type="match status" value="1"/>
</dbReference>
<gene>
    <name evidence="1" type="primary">pdxS</name>
    <name type="ordered locus">OE_3524F</name>
</gene>
<accession>B0R6D5</accession>
<evidence type="ECO:0000255" key="1">
    <source>
        <dbReference type="HAMAP-Rule" id="MF_01824"/>
    </source>
</evidence>
<evidence type="ECO:0000256" key="2">
    <source>
        <dbReference type="SAM" id="MobiDB-lite"/>
    </source>
</evidence>
<protein>
    <recommendedName>
        <fullName evidence="1">Pyridoxal 5'-phosphate synthase subunit PdxS</fullName>
        <shortName evidence="1">PLP synthase subunit PdxS</shortName>
        <ecNumber evidence="1">4.3.3.6</ecNumber>
    </recommendedName>
    <alternativeName>
        <fullName evidence="1">Pdx1</fullName>
    </alternativeName>
</protein>
<organism>
    <name type="scientific">Halobacterium salinarum (strain ATCC 29341 / DSM 671 / R1)</name>
    <dbReference type="NCBI Taxonomy" id="478009"/>
    <lineage>
        <taxon>Archaea</taxon>
        <taxon>Methanobacteriati</taxon>
        <taxon>Methanobacteriota</taxon>
        <taxon>Stenosarchaea group</taxon>
        <taxon>Halobacteria</taxon>
        <taxon>Halobacteriales</taxon>
        <taxon>Halobacteriaceae</taxon>
        <taxon>Halobacterium</taxon>
        <taxon>Halobacterium salinarum NRC-34001</taxon>
    </lineage>
</organism>
<feature type="chain" id="PRO_1000188228" description="Pyridoxal 5'-phosphate synthase subunit PdxS">
    <location>
        <begin position="1"/>
        <end position="302"/>
    </location>
</feature>
<feature type="region of interest" description="Disordered" evidence="2">
    <location>
        <begin position="276"/>
        <end position="302"/>
    </location>
</feature>
<feature type="active site" description="Schiff-base intermediate with D-ribose 5-phosphate" evidence="1">
    <location>
        <position position="89"/>
    </location>
</feature>
<feature type="binding site" evidence="1">
    <location>
        <position position="32"/>
    </location>
    <ligand>
        <name>D-ribose 5-phosphate</name>
        <dbReference type="ChEBI" id="CHEBI:78346"/>
    </ligand>
</feature>
<feature type="binding site" evidence="1">
    <location>
        <position position="161"/>
    </location>
    <ligand>
        <name>D-ribose 5-phosphate</name>
        <dbReference type="ChEBI" id="CHEBI:78346"/>
    </ligand>
</feature>
<feature type="binding site" evidence="1">
    <location>
        <position position="173"/>
    </location>
    <ligand>
        <name>D-glyceraldehyde 3-phosphate</name>
        <dbReference type="ChEBI" id="CHEBI:59776"/>
    </ligand>
</feature>
<feature type="binding site" evidence="1">
    <location>
        <position position="222"/>
    </location>
    <ligand>
        <name>D-ribose 5-phosphate</name>
        <dbReference type="ChEBI" id="CHEBI:78346"/>
    </ligand>
</feature>
<feature type="binding site" evidence="1">
    <location>
        <begin position="243"/>
        <end position="244"/>
    </location>
    <ligand>
        <name>D-ribose 5-phosphate</name>
        <dbReference type="ChEBI" id="CHEBI:78346"/>
    </ligand>
</feature>
<comment type="function">
    <text evidence="1">Catalyzes the formation of pyridoxal 5'-phosphate from ribose 5-phosphate (RBP), glyceraldehyde 3-phosphate (G3P) and ammonia. The ammonia is provided by the PdxT subunit. Can also use ribulose 5-phosphate and dihydroxyacetone phosphate as substrates, resulting from enzyme-catalyzed isomerization of RBP and G3P, respectively.</text>
</comment>
<comment type="catalytic activity">
    <reaction evidence="1">
        <text>aldehydo-D-ribose 5-phosphate + D-glyceraldehyde 3-phosphate + L-glutamine = pyridoxal 5'-phosphate + L-glutamate + phosphate + 3 H2O + H(+)</text>
        <dbReference type="Rhea" id="RHEA:31507"/>
        <dbReference type="ChEBI" id="CHEBI:15377"/>
        <dbReference type="ChEBI" id="CHEBI:15378"/>
        <dbReference type="ChEBI" id="CHEBI:29985"/>
        <dbReference type="ChEBI" id="CHEBI:43474"/>
        <dbReference type="ChEBI" id="CHEBI:58273"/>
        <dbReference type="ChEBI" id="CHEBI:58359"/>
        <dbReference type="ChEBI" id="CHEBI:59776"/>
        <dbReference type="ChEBI" id="CHEBI:597326"/>
        <dbReference type="EC" id="4.3.3.6"/>
    </reaction>
</comment>
<comment type="pathway">
    <text evidence="1">Cofactor biosynthesis; pyridoxal 5'-phosphate biosynthesis.</text>
</comment>
<comment type="subunit">
    <text evidence="1">In the presence of PdxT, forms a dodecamer of heterodimers.</text>
</comment>
<comment type="similarity">
    <text evidence="1">Belongs to the PdxS/SNZ family.</text>
</comment>
<keyword id="KW-0456">Lyase</keyword>
<keyword id="KW-0663">Pyridoxal phosphate</keyword>
<keyword id="KW-0704">Schiff base</keyword>
<proteinExistence type="inferred from homology"/>
<name>PDXS_HALS3</name>